<gene>
    <name type="primary">xpo4</name>
    <name type="ORF">DDB_G0280907</name>
</gene>
<comment type="function">
    <text evidence="1">Mediates the nuclear export of proteins (cargos). In the nucleus binds cooperatively to its cargo and to the GTPase Ran in its active GTP-bound form. Docking of this trimeric complex to the nuclear pore complex (NPC) is mediated through binding to nucleoporins. Upon transit of a nuclear export complex into the cytoplasm, disassembling of the complex and hydrolysis of Ran-GTP to Ran-GDP cause release of the cargo from the export receptor. Xpo4 then return to the nuclear compartment and mediate another round of transport. The directionality of nuclear export is thought to be conferred by an asymmetric distribution of the GTP- and GDP-bound forms of Ran between the cytoplasm and nucleus.</text>
</comment>
<comment type="subunit">
    <text evidence="1">Interacts with Ran and cargo proteins in a GTP-dependent manner.</text>
</comment>
<comment type="subcellular location">
    <subcellularLocation>
        <location evidence="1">Cytoplasm</location>
    </subcellularLocation>
    <subcellularLocation>
        <location evidence="1">Nucleus</location>
    </subcellularLocation>
    <text evidence="1">Shuttles between the nucleus and the cytoplasm.</text>
</comment>
<comment type="similarity">
    <text evidence="2">Belongs to the exportin family.</text>
</comment>
<dbReference type="EMBL" id="AAFI02000039">
    <property type="protein sequence ID" value="EAL66995.1"/>
    <property type="molecule type" value="Genomic_DNA"/>
</dbReference>
<dbReference type="RefSeq" id="XP_640976.1">
    <property type="nucleotide sequence ID" value="XM_635884.1"/>
</dbReference>
<dbReference type="SMR" id="Q54UP5"/>
<dbReference type="FunCoup" id="Q54UP5">
    <property type="interactions" value="221"/>
</dbReference>
<dbReference type="STRING" id="44689.Q54UP5"/>
<dbReference type="PaxDb" id="44689-DDB0237580"/>
<dbReference type="EnsemblProtists" id="EAL66995">
    <property type="protein sequence ID" value="EAL66995"/>
    <property type="gene ID" value="DDB_G0280907"/>
</dbReference>
<dbReference type="GeneID" id="8622780"/>
<dbReference type="KEGG" id="ddi:DDB_G0280907"/>
<dbReference type="dictyBase" id="DDB_G0280907">
    <property type="gene designation" value="xpo4"/>
</dbReference>
<dbReference type="VEuPathDB" id="AmoebaDB:DDB_G0280907"/>
<dbReference type="eggNOG" id="KOG4541">
    <property type="taxonomic scope" value="Eukaryota"/>
</dbReference>
<dbReference type="HOGENOM" id="CLU_005818_0_0_1"/>
<dbReference type="InParanoid" id="Q54UP5"/>
<dbReference type="OMA" id="SCKSIFH"/>
<dbReference type="PhylomeDB" id="Q54UP5"/>
<dbReference type="PRO" id="PR:Q54UP5"/>
<dbReference type="Proteomes" id="UP000002195">
    <property type="component" value="Chromosome 3"/>
</dbReference>
<dbReference type="GO" id="GO:0005737">
    <property type="term" value="C:cytoplasm"/>
    <property type="evidence" value="ECO:0000318"/>
    <property type="project" value="GO_Central"/>
</dbReference>
<dbReference type="GO" id="GO:0005643">
    <property type="term" value="C:nuclear pore"/>
    <property type="evidence" value="ECO:0000318"/>
    <property type="project" value="GO_Central"/>
</dbReference>
<dbReference type="GO" id="GO:0005049">
    <property type="term" value="F:nuclear export signal receptor activity"/>
    <property type="evidence" value="ECO:0000318"/>
    <property type="project" value="GO_Central"/>
</dbReference>
<dbReference type="GO" id="GO:0006611">
    <property type="term" value="P:protein export from nucleus"/>
    <property type="evidence" value="ECO:0000318"/>
    <property type="project" value="GO_Central"/>
</dbReference>
<dbReference type="Gene3D" id="1.25.10.10">
    <property type="entry name" value="Leucine-rich Repeat Variant"/>
    <property type="match status" value="1"/>
</dbReference>
<dbReference type="InterPro" id="IPR011989">
    <property type="entry name" value="ARM-like"/>
</dbReference>
<dbReference type="InterPro" id="IPR016024">
    <property type="entry name" value="ARM-type_fold"/>
</dbReference>
<dbReference type="InterPro" id="IPR044189">
    <property type="entry name" value="XPO4/7-like"/>
</dbReference>
<dbReference type="PANTHER" id="PTHR12596">
    <property type="entry name" value="EXPORTIN 4,7-RELATED"/>
    <property type="match status" value="1"/>
</dbReference>
<dbReference type="PANTHER" id="PTHR12596:SF1">
    <property type="entry name" value="EXPORTIN-4"/>
    <property type="match status" value="1"/>
</dbReference>
<dbReference type="SUPFAM" id="SSF48371">
    <property type="entry name" value="ARM repeat"/>
    <property type="match status" value="1"/>
</dbReference>
<organism>
    <name type="scientific">Dictyostelium discoideum</name>
    <name type="common">Social amoeba</name>
    <dbReference type="NCBI Taxonomy" id="44689"/>
    <lineage>
        <taxon>Eukaryota</taxon>
        <taxon>Amoebozoa</taxon>
        <taxon>Evosea</taxon>
        <taxon>Eumycetozoa</taxon>
        <taxon>Dictyostelia</taxon>
        <taxon>Dictyosteliales</taxon>
        <taxon>Dictyosteliaceae</taxon>
        <taxon>Dictyostelium</taxon>
    </lineage>
</organism>
<accession>Q54UP5</accession>
<name>XPO4_DICDI</name>
<sequence length="1133" mass="130185">MEIEFIQNLEKFCIGLQSNKSNERETSEQSILTLMKTPQPYKLCFNLLSKSNLTIAHFYGLLMIRDSAIREWAALDSQTKIMIIETLFQYIENMNSMNFLNYATKGQSFNTLGVIIKRSWLDNEKYEIGKGQMELNQIVMDRVYQYIDSGSPDRIEISIKIIGSLIIEFSSSSKAAHIQLSWEFHQKCLITFQNLHLQPIFRKVLELLQQFKDHIQQVPSRLTDQSFLQILYTSVKVFTDILDWRFLESGSSVLAYITSFSGGRTNLKPTIEWISLFTPSQSGGGISPIVSLVFGLYQLVEKVEKIPNLLRHAMSQLCGLQGPIIKDQKIKNQYLSEVLTFTNKLIEKSITTRNWNEMEDISNIIYKFCNTYKFSGIACLPNQIVIPFLQYTTQFVLSSLNLMKIWAKHGEEELEEEFENDCFDILLRSFVSLISDAEMLINRKRVDQLENFKEQYQVLKQCTSQIYQNYIQSRLELSEIEINKSNEELEPTCKSRGGIGGAEDEIDEDKKKYDEQLRSVAYIGRLNPGQSLELLKNEINRVINSLKERVSDPILFESLHWLLIFAGHLIFDAENKTPSAIPNAIEDYTFEQCKLTPASQVDGVIDLCNAVFRFHMEYENPLLNNGKMDTISPLVSQTSLWFTSGWSLVYLLPSSVFNVQISPKIIEAYGTEQPLLSITDYFINKILLNLKCWSGDLDVLKATSNLLNSFTLNKELCKYLIRSPNWSRLFFLEGISLLPPSVYGQLFKAFSRVVFSFPLSTRREYFIQLVKTLVEQMDGVLGRADFTKISQEAKIKENIYILLEKLNGIVSVSESEYVDDEDDCLFLTVDLFTKYATSLIAMIPLYDHCNDIVLLILRLFSNFTKHQLEYLNQDRARSIFPLIIQLFNSVATTSSHKKTLDSKEYYHRVRMMVKILTNIITFGDQRNNCPTIISETIFHAINIITPCLSNNDLLLYPKLARNYFMITSFLFGADNIQVKNIPVINTIYSLIEAGILHHDLEIVKSCFECIGCLTKSLENSKEKSGGLVDPHYQSVLIQFIGSVINFLLLQDFNVDELLSVASETLFSLMYSSPDGYRSKVIELITRQDPSIQSRVVQQFETLTIIGTDRKSKDLFMKNLQNFLVNVKSLINKK</sequence>
<reference key="1">
    <citation type="journal article" date="2005" name="Nature">
        <title>The genome of the social amoeba Dictyostelium discoideum.</title>
        <authorList>
            <person name="Eichinger L."/>
            <person name="Pachebat J.A."/>
            <person name="Gloeckner G."/>
            <person name="Rajandream M.A."/>
            <person name="Sucgang R."/>
            <person name="Berriman M."/>
            <person name="Song J."/>
            <person name="Olsen R."/>
            <person name="Szafranski K."/>
            <person name="Xu Q."/>
            <person name="Tunggal B."/>
            <person name="Kummerfeld S."/>
            <person name="Madera M."/>
            <person name="Konfortov B.A."/>
            <person name="Rivero F."/>
            <person name="Bankier A.T."/>
            <person name="Lehmann R."/>
            <person name="Hamlin N."/>
            <person name="Davies R."/>
            <person name="Gaudet P."/>
            <person name="Fey P."/>
            <person name="Pilcher K."/>
            <person name="Chen G."/>
            <person name="Saunders D."/>
            <person name="Sodergren E.J."/>
            <person name="Davis P."/>
            <person name="Kerhornou A."/>
            <person name="Nie X."/>
            <person name="Hall N."/>
            <person name="Anjard C."/>
            <person name="Hemphill L."/>
            <person name="Bason N."/>
            <person name="Farbrother P."/>
            <person name="Desany B."/>
            <person name="Just E."/>
            <person name="Morio T."/>
            <person name="Rost R."/>
            <person name="Churcher C.M."/>
            <person name="Cooper J."/>
            <person name="Haydock S."/>
            <person name="van Driessche N."/>
            <person name="Cronin A."/>
            <person name="Goodhead I."/>
            <person name="Muzny D.M."/>
            <person name="Mourier T."/>
            <person name="Pain A."/>
            <person name="Lu M."/>
            <person name="Harper D."/>
            <person name="Lindsay R."/>
            <person name="Hauser H."/>
            <person name="James K.D."/>
            <person name="Quiles M."/>
            <person name="Madan Babu M."/>
            <person name="Saito T."/>
            <person name="Buchrieser C."/>
            <person name="Wardroper A."/>
            <person name="Felder M."/>
            <person name="Thangavelu M."/>
            <person name="Johnson D."/>
            <person name="Knights A."/>
            <person name="Loulseged H."/>
            <person name="Mungall K.L."/>
            <person name="Oliver K."/>
            <person name="Price C."/>
            <person name="Quail M.A."/>
            <person name="Urushihara H."/>
            <person name="Hernandez J."/>
            <person name="Rabbinowitsch E."/>
            <person name="Steffen D."/>
            <person name="Sanders M."/>
            <person name="Ma J."/>
            <person name="Kohara Y."/>
            <person name="Sharp S."/>
            <person name="Simmonds M.N."/>
            <person name="Spiegler S."/>
            <person name="Tivey A."/>
            <person name="Sugano S."/>
            <person name="White B."/>
            <person name="Walker D."/>
            <person name="Woodward J.R."/>
            <person name="Winckler T."/>
            <person name="Tanaka Y."/>
            <person name="Shaulsky G."/>
            <person name="Schleicher M."/>
            <person name="Weinstock G.M."/>
            <person name="Rosenthal A."/>
            <person name="Cox E.C."/>
            <person name="Chisholm R.L."/>
            <person name="Gibbs R.A."/>
            <person name="Loomis W.F."/>
            <person name="Platzer M."/>
            <person name="Kay R.R."/>
            <person name="Williams J.G."/>
            <person name="Dear P.H."/>
            <person name="Noegel A.A."/>
            <person name="Barrell B.G."/>
            <person name="Kuspa A."/>
        </authorList>
    </citation>
    <scope>NUCLEOTIDE SEQUENCE [LARGE SCALE GENOMIC DNA]</scope>
    <source>
        <strain>AX4</strain>
    </source>
</reference>
<feature type="chain" id="PRO_0000328538" description="Exportin-4">
    <location>
        <begin position="1"/>
        <end position="1133"/>
    </location>
</feature>
<proteinExistence type="inferred from homology"/>
<keyword id="KW-0963">Cytoplasm</keyword>
<keyword id="KW-0539">Nucleus</keyword>
<keyword id="KW-0653">Protein transport</keyword>
<keyword id="KW-1185">Reference proteome</keyword>
<keyword id="KW-0813">Transport</keyword>
<evidence type="ECO:0000250" key="1">
    <source>
        <dbReference type="UniProtKB" id="Q9C0E2"/>
    </source>
</evidence>
<evidence type="ECO:0000305" key="2"/>
<protein>
    <recommendedName>
        <fullName>Exportin-4</fullName>
        <shortName>Exp4</shortName>
    </recommendedName>
</protein>